<protein>
    <recommendedName>
        <fullName evidence="1">Gamma-aminobutyraldehyde dehydrogenase</fullName>
        <shortName evidence="1">ABALDH</shortName>
        <ecNumber evidence="1">1.2.1.19</ecNumber>
    </recommendedName>
    <alternativeName>
        <fullName evidence="1">1-pyrroline dehydrogenase</fullName>
    </alternativeName>
    <alternativeName>
        <fullName evidence="1">4-aminobutanal dehydrogenase</fullName>
    </alternativeName>
    <alternativeName>
        <fullName evidence="1">5-aminopentanal dehydrogenase</fullName>
        <ecNumber evidence="1">1.2.1.-</ecNumber>
    </alternativeName>
</protein>
<keyword id="KW-0520">NAD</keyword>
<keyword id="KW-0560">Oxidoreductase</keyword>
<keyword id="KW-1185">Reference proteome</keyword>
<feature type="chain" id="PRO_1000067391" description="Gamma-aminobutyraldehyde dehydrogenase">
    <location>
        <begin position="1"/>
        <end position="474"/>
    </location>
</feature>
<feature type="active site" evidence="1">
    <location>
        <position position="246"/>
    </location>
</feature>
<feature type="active site" description="Nucleophile" evidence="1">
    <location>
        <position position="280"/>
    </location>
</feature>
<feature type="binding site" evidence="1">
    <location>
        <begin position="146"/>
        <end position="148"/>
    </location>
    <ligand>
        <name>NAD(+)</name>
        <dbReference type="ChEBI" id="CHEBI:57540"/>
    </ligand>
</feature>
<feature type="binding site" evidence="1">
    <location>
        <begin position="172"/>
        <end position="175"/>
    </location>
    <ligand>
        <name>NAD(+)</name>
        <dbReference type="ChEBI" id="CHEBI:57540"/>
    </ligand>
</feature>
<feature type="binding site" evidence="1">
    <location>
        <position position="209"/>
    </location>
    <ligand>
        <name>NAD(+)</name>
        <dbReference type="ChEBI" id="CHEBI:57540"/>
    </ligand>
</feature>
<feature type="binding site" evidence="1">
    <location>
        <begin position="225"/>
        <end position="228"/>
    </location>
    <ligand>
        <name>NAD(+)</name>
        <dbReference type="ChEBI" id="CHEBI:57540"/>
    </ligand>
</feature>
<feature type="binding site" evidence="1">
    <location>
        <position position="280"/>
    </location>
    <ligand>
        <name>NAD(+)</name>
        <dbReference type="ChEBI" id="CHEBI:57540"/>
    </ligand>
</feature>
<evidence type="ECO:0000255" key="1">
    <source>
        <dbReference type="HAMAP-Rule" id="MF_01275"/>
    </source>
</evidence>
<organism>
    <name type="scientific">Escherichia coli O139:H28 (strain E24377A / ETEC)</name>
    <dbReference type="NCBI Taxonomy" id="331111"/>
    <lineage>
        <taxon>Bacteria</taxon>
        <taxon>Pseudomonadati</taxon>
        <taxon>Pseudomonadota</taxon>
        <taxon>Gammaproteobacteria</taxon>
        <taxon>Enterobacterales</taxon>
        <taxon>Enterobacteriaceae</taxon>
        <taxon>Escherichia</taxon>
    </lineage>
</organism>
<reference key="1">
    <citation type="journal article" date="2008" name="J. Bacteriol.">
        <title>The pangenome structure of Escherichia coli: comparative genomic analysis of E. coli commensal and pathogenic isolates.</title>
        <authorList>
            <person name="Rasko D.A."/>
            <person name="Rosovitz M.J."/>
            <person name="Myers G.S.A."/>
            <person name="Mongodin E.F."/>
            <person name="Fricke W.F."/>
            <person name="Gajer P."/>
            <person name="Crabtree J."/>
            <person name="Sebaihia M."/>
            <person name="Thomson N.R."/>
            <person name="Chaudhuri R."/>
            <person name="Henderson I.R."/>
            <person name="Sperandio V."/>
            <person name="Ravel J."/>
        </authorList>
    </citation>
    <scope>NUCLEOTIDE SEQUENCE [LARGE SCALE GENOMIC DNA]</scope>
    <source>
        <strain>E24377A / ETEC</strain>
    </source>
</reference>
<gene>
    <name evidence="1" type="primary">patD</name>
    <name type="ordered locus">EcE24377A_1624</name>
</gene>
<sequence>MQHKLLINGELVSGEGEKQPVYNPATGDVLLEIAEASAEQVDAAVRAADAAFAEWGQTTPKVRAECLLKLADVIEENGQVFAELESRNCGKPLHSAFNDEIPAIVDVFRFFAGAARCLNGLAAGEYLEGHTSMIRRDPLGVVASIAPWNYPLMMAAWKLAPALAAGNCVVLKPSEITPLTALKLAELAKDIFPAGVINVLFGRGKTVGDPLTGHPKVRMVSLTGSIATGEHIISHTASSIKRTHMELGGKAPVIVFDDADIEAVVEGVRTFGYYNAGQDCTAACRIYAQKGIYDTLVEKLGAAVATLKSGAPDDESTELGPLSSLAHLERVSKAVEEAKATGHIKVITGGEKRKGNGYYYAPTLLAGALQDDAIVQKEVFGPVVSVTPFDNEEQVVNWANDSQYGLASSVWTKDVGRAHRVSARLQYGCTWVNTHFMLVSEMPHGGQKLSGYGKDMSLYGLEDYTVVRHVMVKH</sequence>
<name>ABDH_ECO24</name>
<dbReference type="EC" id="1.2.1.19" evidence="1"/>
<dbReference type="EC" id="1.2.1.-" evidence="1"/>
<dbReference type="EMBL" id="CP000800">
    <property type="protein sequence ID" value="ABV19711.1"/>
    <property type="molecule type" value="Genomic_DNA"/>
</dbReference>
<dbReference type="RefSeq" id="WP_001163892.1">
    <property type="nucleotide sequence ID" value="NC_009801.1"/>
</dbReference>
<dbReference type="SMR" id="A7ZLN7"/>
<dbReference type="GeneID" id="75202365"/>
<dbReference type="KEGG" id="ecw:EcE24377A_1624"/>
<dbReference type="HOGENOM" id="CLU_005391_1_0_6"/>
<dbReference type="UniPathway" id="UPA00188">
    <property type="reaction ID" value="UER00292"/>
</dbReference>
<dbReference type="Proteomes" id="UP000001122">
    <property type="component" value="Chromosome"/>
</dbReference>
<dbReference type="GO" id="GO:0019145">
    <property type="term" value="F:aminobutyraldehyde dehydrogenase (NAD+) activity"/>
    <property type="evidence" value="ECO:0007669"/>
    <property type="project" value="UniProtKB-UniRule"/>
</dbReference>
<dbReference type="GO" id="GO:0051287">
    <property type="term" value="F:NAD binding"/>
    <property type="evidence" value="ECO:0007669"/>
    <property type="project" value="UniProtKB-UniRule"/>
</dbReference>
<dbReference type="GO" id="GO:0019477">
    <property type="term" value="P:L-lysine catabolic process"/>
    <property type="evidence" value="ECO:0007669"/>
    <property type="project" value="UniProtKB-UniRule"/>
</dbReference>
<dbReference type="GO" id="GO:0009447">
    <property type="term" value="P:putrescine catabolic process"/>
    <property type="evidence" value="ECO:0007669"/>
    <property type="project" value="UniProtKB-UniRule"/>
</dbReference>
<dbReference type="CDD" id="cd07092">
    <property type="entry name" value="ALDH_ABALDH-YdcW"/>
    <property type="match status" value="1"/>
</dbReference>
<dbReference type="FunFam" id="3.40.605.10:FF:000001">
    <property type="entry name" value="Aldehyde dehydrogenase 1"/>
    <property type="match status" value="1"/>
</dbReference>
<dbReference type="FunFam" id="3.40.309.10:FF:000010">
    <property type="entry name" value="Gamma-aminobutyraldehyde dehydrogenase"/>
    <property type="match status" value="1"/>
</dbReference>
<dbReference type="Gene3D" id="3.40.605.10">
    <property type="entry name" value="Aldehyde Dehydrogenase, Chain A, domain 1"/>
    <property type="match status" value="1"/>
</dbReference>
<dbReference type="Gene3D" id="3.40.309.10">
    <property type="entry name" value="Aldehyde Dehydrogenase, Chain A, domain 2"/>
    <property type="match status" value="1"/>
</dbReference>
<dbReference type="HAMAP" id="MF_01275">
    <property type="entry name" value="Aldedh_Prr"/>
    <property type="match status" value="1"/>
</dbReference>
<dbReference type="InterPro" id="IPR016161">
    <property type="entry name" value="Ald_DH/histidinol_DH"/>
</dbReference>
<dbReference type="InterPro" id="IPR016163">
    <property type="entry name" value="Ald_DH_C"/>
</dbReference>
<dbReference type="InterPro" id="IPR029510">
    <property type="entry name" value="Ald_DH_CS_GLU"/>
</dbReference>
<dbReference type="InterPro" id="IPR016162">
    <property type="entry name" value="Ald_DH_N"/>
</dbReference>
<dbReference type="InterPro" id="IPR015590">
    <property type="entry name" value="Aldehyde_DH_dom"/>
</dbReference>
<dbReference type="InterPro" id="IPR015657">
    <property type="entry name" value="Aminobutyraldehyde_DH"/>
</dbReference>
<dbReference type="InterPro" id="IPR017749">
    <property type="entry name" value="PatD"/>
</dbReference>
<dbReference type="NCBIfam" id="TIGR03374">
    <property type="entry name" value="ABALDH"/>
    <property type="match status" value="1"/>
</dbReference>
<dbReference type="NCBIfam" id="NF010000">
    <property type="entry name" value="PRK13473.1"/>
    <property type="match status" value="1"/>
</dbReference>
<dbReference type="PANTHER" id="PTHR11699">
    <property type="entry name" value="ALDEHYDE DEHYDROGENASE-RELATED"/>
    <property type="match status" value="1"/>
</dbReference>
<dbReference type="Pfam" id="PF00171">
    <property type="entry name" value="Aldedh"/>
    <property type="match status" value="1"/>
</dbReference>
<dbReference type="SUPFAM" id="SSF53720">
    <property type="entry name" value="ALDH-like"/>
    <property type="match status" value="1"/>
</dbReference>
<dbReference type="PROSITE" id="PS00687">
    <property type="entry name" value="ALDEHYDE_DEHYDR_GLU"/>
    <property type="match status" value="1"/>
</dbReference>
<comment type="function">
    <text evidence="1">Catalyzes the oxidation 4-aminobutanal (gamma-aminobutyraldehyde) to 4-aminobutanoate (gamma-aminobutyrate or GABA). This is the second step in one of two pathways for putrescine degradation, where putrescine is converted into 4-aminobutanoate via 4-aminobutanal. Also functions as a 5-aminopentanal dehydrogenase in a a L-lysine degradation pathway to succinate that proceeds via cadaverine, glutarate and L-2-hydroxyglutarate.</text>
</comment>
<comment type="catalytic activity">
    <reaction evidence="1">
        <text>4-aminobutanal + NAD(+) + H2O = 4-aminobutanoate + NADH + 2 H(+)</text>
        <dbReference type="Rhea" id="RHEA:19105"/>
        <dbReference type="ChEBI" id="CHEBI:15377"/>
        <dbReference type="ChEBI" id="CHEBI:15378"/>
        <dbReference type="ChEBI" id="CHEBI:57540"/>
        <dbReference type="ChEBI" id="CHEBI:57945"/>
        <dbReference type="ChEBI" id="CHEBI:58264"/>
        <dbReference type="ChEBI" id="CHEBI:59888"/>
        <dbReference type="EC" id="1.2.1.19"/>
    </reaction>
    <physiologicalReaction direction="left-to-right" evidence="1">
        <dbReference type="Rhea" id="RHEA:19106"/>
    </physiologicalReaction>
</comment>
<comment type="catalytic activity">
    <reaction evidence="1">
        <text>5-aminopentanal + NAD(+) + H2O = 5-aminopentanoate + NADH + 2 H(+)</text>
        <dbReference type="Rhea" id="RHEA:61632"/>
        <dbReference type="ChEBI" id="CHEBI:15377"/>
        <dbReference type="ChEBI" id="CHEBI:15378"/>
        <dbReference type="ChEBI" id="CHEBI:57540"/>
        <dbReference type="ChEBI" id="CHEBI:57945"/>
        <dbReference type="ChEBI" id="CHEBI:144896"/>
        <dbReference type="ChEBI" id="CHEBI:356010"/>
    </reaction>
    <physiologicalReaction direction="left-to-right" evidence="1">
        <dbReference type="Rhea" id="RHEA:61633"/>
    </physiologicalReaction>
</comment>
<comment type="pathway">
    <text evidence="1">Amine and polyamine degradation; putrescine degradation; 4-aminobutanoate from 4-aminobutanal: step 1/1.</text>
</comment>
<comment type="pathway">
    <text evidence="1">Amino-acid degradation.</text>
</comment>
<comment type="subunit">
    <text evidence="1">Homotetramer.</text>
</comment>
<comment type="miscellaneous">
    <text evidence="1">4-aminobutanal can spontaneously cyclize to 1-pyrroline, and 5-aminopentanal to 1-piperideine.</text>
</comment>
<comment type="similarity">
    <text evidence="1">Belongs to the aldehyde dehydrogenase family. Gamma-aminobutyraldehyde dehydrogenase subfamily.</text>
</comment>
<accession>A7ZLN7</accession>
<proteinExistence type="inferred from homology"/>